<feature type="initiator methionine" description="Removed" evidence="2">
    <location>
        <position position="1"/>
    </location>
</feature>
<feature type="chain" id="PRO_0000057558" description="Beta-crystallin B2">
    <location>
        <begin position="2"/>
        <end position="205"/>
    </location>
</feature>
<feature type="domain" description="Beta/gamma crystallin 'Greek key' 1" evidence="3">
    <location>
        <begin position="17"/>
        <end position="56"/>
    </location>
</feature>
<feature type="domain" description="Beta/gamma crystallin 'Greek key' 2" evidence="3">
    <location>
        <begin position="57"/>
        <end position="101"/>
    </location>
</feature>
<feature type="domain" description="Beta/gamma crystallin 'Greek key' 3" evidence="3">
    <location>
        <begin position="107"/>
        <end position="148"/>
    </location>
</feature>
<feature type="domain" description="Beta/gamma crystallin 'Greek key' 4" evidence="3">
    <location>
        <begin position="149"/>
        <end position="191"/>
    </location>
</feature>
<feature type="region of interest" description="N-terminal arm">
    <location>
        <begin position="2"/>
        <end position="16"/>
    </location>
</feature>
<feature type="region of interest" description="Connecting peptide">
    <location>
        <begin position="102"/>
        <end position="106"/>
    </location>
</feature>
<feature type="region of interest" description="C-terminal arm">
    <location>
        <begin position="193"/>
        <end position="205"/>
    </location>
</feature>
<feature type="modified residue" description="N-acetylalanine" evidence="2">
    <location>
        <position position="2"/>
    </location>
</feature>
<dbReference type="EMBL" id="X91989">
    <property type="protein sequence ID" value="CAA63044.1"/>
    <property type="molecule type" value="mRNA"/>
</dbReference>
<dbReference type="PIR" id="JC4528">
    <property type="entry name" value="JC4528"/>
</dbReference>
<dbReference type="SMR" id="Q91318"/>
<dbReference type="GO" id="GO:0005212">
    <property type="term" value="F:structural constituent of eye lens"/>
    <property type="evidence" value="ECO:0007669"/>
    <property type="project" value="UniProtKB-KW"/>
</dbReference>
<dbReference type="GO" id="GO:0002088">
    <property type="term" value="P:lens development in camera-type eye"/>
    <property type="evidence" value="ECO:0007669"/>
    <property type="project" value="TreeGrafter"/>
</dbReference>
<dbReference type="GO" id="GO:0007601">
    <property type="term" value="P:visual perception"/>
    <property type="evidence" value="ECO:0007669"/>
    <property type="project" value="TreeGrafter"/>
</dbReference>
<dbReference type="FunFam" id="2.60.20.10:FF:000005">
    <property type="entry name" value="Crystallin, beta B1"/>
    <property type="match status" value="1"/>
</dbReference>
<dbReference type="FunFam" id="2.60.20.10:FF:000002">
    <property type="entry name" value="Crystallin, beta B2"/>
    <property type="match status" value="1"/>
</dbReference>
<dbReference type="Gene3D" id="2.60.20.10">
    <property type="entry name" value="Crystallins"/>
    <property type="match status" value="2"/>
</dbReference>
<dbReference type="InterPro" id="IPR050252">
    <property type="entry name" value="Beta/Gamma-Crystallin"/>
</dbReference>
<dbReference type="InterPro" id="IPR001064">
    <property type="entry name" value="Beta/gamma_crystallin"/>
</dbReference>
<dbReference type="InterPro" id="IPR011024">
    <property type="entry name" value="G_crystallin-like"/>
</dbReference>
<dbReference type="PANTHER" id="PTHR11818:SF11">
    <property type="entry name" value="BETA-CRYSTALLIN B2"/>
    <property type="match status" value="1"/>
</dbReference>
<dbReference type="PANTHER" id="PTHR11818">
    <property type="entry name" value="BETA/GAMMA CRYSTALLIN"/>
    <property type="match status" value="1"/>
</dbReference>
<dbReference type="Pfam" id="PF00030">
    <property type="entry name" value="Crystall"/>
    <property type="match status" value="2"/>
</dbReference>
<dbReference type="PRINTS" id="PR01367">
    <property type="entry name" value="BGCRYSTALLIN"/>
</dbReference>
<dbReference type="SMART" id="SM00247">
    <property type="entry name" value="XTALbg"/>
    <property type="match status" value="2"/>
</dbReference>
<dbReference type="SUPFAM" id="SSF49695">
    <property type="entry name" value="gamma-Crystallin-like"/>
    <property type="match status" value="1"/>
</dbReference>
<dbReference type="PROSITE" id="PS50915">
    <property type="entry name" value="CRYSTALLIN_BETA_GAMMA"/>
    <property type="match status" value="4"/>
</dbReference>
<comment type="function">
    <text>Crystallins are the dominant structural components of the vertebrate eye lens.</text>
</comment>
<comment type="subunit">
    <text evidence="1">Homo/heterodimer, or complexes of higher-order. The structure of beta-crystallin oligomers seems to be stabilized through interactions between the N-terminal arms (By similarity).</text>
</comment>
<comment type="domain">
    <text>Has a two-domain beta-structure, folded into four very similar Greek key motifs.</text>
</comment>
<comment type="PTM">
    <text>The N-terminus is blocked.</text>
</comment>
<comment type="similarity">
    <text evidence="4">Belongs to the beta/gamma-crystallin family.</text>
</comment>
<keyword id="KW-0007">Acetylation</keyword>
<keyword id="KW-0273">Eye lens protein</keyword>
<keyword id="KW-0677">Repeat</keyword>
<reference key="1">
    <citation type="journal article" date="1995" name="Biochem. Biophys. Res. Commun.">
        <title>Sequence analysis of one major basic beta-crystallin (beta Bp) of amphibian lenses: evolutionary comparison and phylogenetic relatedness between beta- and gamma-crystallins.</title>
        <authorList>
            <person name="Pan F.-M."/>
            <person name="Chang W.-C."/>
            <person name="Lu S.-F."/>
            <person name="Hsu A.-L."/>
            <person name="Chiou S.-H."/>
        </authorList>
    </citation>
    <scope>NUCLEOTIDE SEQUENCE [MRNA]</scope>
    <source>
        <tissue>Lens</tissue>
    </source>
</reference>
<protein>
    <recommendedName>
        <fullName>Beta-crystallin B2</fullName>
    </recommendedName>
    <alternativeName>
        <fullName>Beta-B2 crystallin</fullName>
    </alternativeName>
    <alternativeName>
        <fullName>Beta-crystallin Bp</fullName>
    </alternativeName>
</protein>
<name>CRBB2_AQUCT</name>
<organism>
    <name type="scientific">Aquarana catesbeiana</name>
    <name type="common">American bullfrog</name>
    <name type="synonym">Rana catesbeiana</name>
    <dbReference type="NCBI Taxonomy" id="8400"/>
    <lineage>
        <taxon>Eukaryota</taxon>
        <taxon>Metazoa</taxon>
        <taxon>Chordata</taxon>
        <taxon>Craniata</taxon>
        <taxon>Vertebrata</taxon>
        <taxon>Euteleostomi</taxon>
        <taxon>Amphibia</taxon>
        <taxon>Batrachia</taxon>
        <taxon>Anura</taxon>
        <taxon>Neobatrachia</taxon>
        <taxon>Ranoidea</taxon>
        <taxon>Ranidae</taxon>
        <taxon>Aquarana</taxon>
    </lineage>
</organism>
<proteinExistence type="evidence at transcript level"/>
<evidence type="ECO:0000250" key="1"/>
<evidence type="ECO:0000250" key="2">
    <source>
        <dbReference type="UniProtKB" id="P02522"/>
    </source>
</evidence>
<evidence type="ECO:0000255" key="3">
    <source>
        <dbReference type="PROSITE-ProRule" id="PRU00028"/>
    </source>
</evidence>
<evidence type="ECO:0000305" key="4"/>
<sequence>MASDHQSPATKQQQPSSKIVLFEQENFQGRCHELSGPCTSLKEAGMEKIGSILVHSGPWVGYEQQNCKGEQFVFEKGEYPRWDSWTNSRKSESISSLRPIKVDSQEHKIVLYENPNFTGKKIEIIDDDVPSFHAHGYQEKVSSVRVQSGTWVGYQYPGYRGYQYLFEKGDYKDSSDFGAQHPQIQSVRRIRDMQWHQRGTFHPTN</sequence>
<accession>Q91318</accession>